<gene>
    <name type="primary">TOR2A</name>
</gene>
<comment type="subunit">
    <text evidence="1">Homohexamer. Interacts with TOR1AIP1 (By similarity).</text>
</comment>
<comment type="subcellular location">
    <subcellularLocation>
        <location>Endoplasmic reticulum lumen</location>
    </subcellularLocation>
</comment>
<comment type="alternative products">
    <event type="alternative splicing"/>
    <isoform>
        <id>A4FUH1-1</id>
        <name>1</name>
        <sequence type="displayed"/>
    </isoform>
    <isoform>
        <id>P0C7W1-1</id>
        <name>2</name>
        <name>Prosalusin</name>
        <sequence type="external"/>
    </isoform>
</comment>
<comment type="similarity">
    <text evidence="3">Belongs to the ClpA/ClpB family. Torsin subfamily.</text>
</comment>
<feature type="signal peptide" evidence="2">
    <location>
        <begin position="1"/>
        <end position="26"/>
    </location>
</feature>
<feature type="chain" id="PRO_0000345620" description="Torsin-2A">
    <location>
        <begin position="27"/>
        <end position="321"/>
    </location>
</feature>
<feature type="binding site" evidence="2">
    <location>
        <begin position="93"/>
        <end position="100"/>
    </location>
    <ligand>
        <name>ATP</name>
        <dbReference type="ChEBI" id="CHEBI:30616"/>
    </ligand>
</feature>
<feature type="glycosylation site" description="N-linked (GlcNAc...) asparagine" evidence="2">
    <location>
        <position position="149"/>
    </location>
</feature>
<accession>A4FUH1</accession>
<reference key="1">
    <citation type="submission" date="2006-04" db="EMBL/GenBank/DDBJ databases">
        <authorList>
            <consortium name="NIH - Mammalian Gene Collection (MGC) project"/>
        </authorList>
    </citation>
    <scope>NUCLEOTIDE SEQUENCE [LARGE SCALE MRNA]</scope>
    <source>
        <strain>Hereford</strain>
        <tissue>Thymus</tissue>
    </source>
</reference>
<proteinExistence type="evidence at transcript level"/>
<protein>
    <recommendedName>
        <fullName>Torsin-2A</fullName>
    </recommendedName>
    <alternativeName>
        <fullName>Torsin family 2 member A</fullName>
    </alternativeName>
</protein>
<organism>
    <name type="scientific">Bos taurus</name>
    <name type="common">Bovine</name>
    <dbReference type="NCBI Taxonomy" id="9913"/>
    <lineage>
        <taxon>Eukaryota</taxon>
        <taxon>Metazoa</taxon>
        <taxon>Chordata</taxon>
        <taxon>Craniata</taxon>
        <taxon>Vertebrata</taxon>
        <taxon>Euteleostomi</taxon>
        <taxon>Mammalia</taxon>
        <taxon>Eutheria</taxon>
        <taxon>Laurasiatheria</taxon>
        <taxon>Artiodactyla</taxon>
        <taxon>Ruminantia</taxon>
        <taxon>Pecora</taxon>
        <taxon>Bovidae</taxon>
        <taxon>Bovinae</taxon>
        <taxon>Bos</taxon>
    </lineage>
</organism>
<name>TOR2A_BOVIN</name>
<keyword id="KW-0025">Alternative splicing</keyword>
<keyword id="KW-0067">ATP-binding</keyword>
<keyword id="KW-0256">Endoplasmic reticulum</keyword>
<keyword id="KW-0325">Glycoprotein</keyword>
<keyword id="KW-0547">Nucleotide-binding</keyword>
<keyword id="KW-1185">Reference proteome</keyword>
<keyword id="KW-0732">Signal</keyword>
<evidence type="ECO:0000250" key="1"/>
<evidence type="ECO:0000255" key="2"/>
<evidence type="ECO:0000305" key="3"/>
<sequence>MAAATRSCRPWGSLLGLIWLVSAAAASWDLSSLRCNFGSFCECDFQPDFQGLECDLAQHLAGQHLARSLVVKALKAFLQDPAPTKPLVLSLHGWTGTGKSYVSSLLAHYLFRDGLRSPHVHHFSPVIHFPHPSHLERYKKDLKSWVQGNLTVCSRSLFLFDEMDKLAPGLIEVLRPFLGSSWVVYGTNYRKAIFIFISNTGGEQINQVVLEAWRSRREREEIGLQELGPVISQAVLDNPHHGFWRSGIMEEHLLDVLVPFLPLQRHHVRHCVLNELAHLGLEPRDEVVQAVLDSTIFFPEDEPLFSSNGCKMVASRIAFFL</sequence>
<dbReference type="EMBL" id="BC114885">
    <property type="protein sequence ID" value="AAI14886.1"/>
    <property type="molecule type" value="mRNA"/>
</dbReference>
<dbReference type="RefSeq" id="NP_001076945.1">
    <molecule id="A4FUH1-1"/>
    <property type="nucleotide sequence ID" value="NM_001083476.2"/>
</dbReference>
<dbReference type="SMR" id="A4FUH1"/>
<dbReference type="FunCoup" id="A4FUH1">
    <property type="interactions" value="1065"/>
</dbReference>
<dbReference type="STRING" id="9913.ENSBTAP00000017963"/>
<dbReference type="GlyCosmos" id="A4FUH1">
    <property type="glycosylation" value="1 site, No reported glycans"/>
</dbReference>
<dbReference type="GlyGen" id="A4FUH1">
    <property type="glycosylation" value="1 site"/>
</dbReference>
<dbReference type="PaxDb" id="9913-ENSBTAP00000017963"/>
<dbReference type="Ensembl" id="ENSBTAT00000017963.6">
    <molecule id="A4FUH1-1"/>
    <property type="protein sequence ID" value="ENSBTAP00000017963.4"/>
    <property type="gene ID" value="ENSBTAG00000013510.6"/>
</dbReference>
<dbReference type="GeneID" id="534311"/>
<dbReference type="KEGG" id="bta:534311"/>
<dbReference type="CTD" id="27433"/>
<dbReference type="VEuPathDB" id="HostDB:ENSBTAG00000013510"/>
<dbReference type="eggNOG" id="KOG2170">
    <property type="taxonomic scope" value="Eukaryota"/>
</dbReference>
<dbReference type="GeneTree" id="ENSGT00950000182888"/>
<dbReference type="HOGENOM" id="CLU_053537_0_0_1"/>
<dbReference type="InParanoid" id="A4FUH1"/>
<dbReference type="OMA" id="CECDFKP"/>
<dbReference type="OrthoDB" id="19623at2759"/>
<dbReference type="TreeFam" id="TF314941"/>
<dbReference type="Proteomes" id="UP000009136">
    <property type="component" value="Chromosome 11"/>
</dbReference>
<dbReference type="Bgee" id="ENSBTAG00000013510">
    <property type="expression patterns" value="Expressed in oocyte and 106 other cell types or tissues"/>
</dbReference>
<dbReference type="GO" id="GO:0005788">
    <property type="term" value="C:endoplasmic reticulum lumen"/>
    <property type="evidence" value="ECO:0000318"/>
    <property type="project" value="GO_Central"/>
</dbReference>
<dbReference type="GO" id="GO:0005635">
    <property type="term" value="C:nuclear envelope"/>
    <property type="evidence" value="ECO:0000318"/>
    <property type="project" value="GO_Central"/>
</dbReference>
<dbReference type="GO" id="GO:0005524">
    <property type="term" value="F:ATP binding"/>
    <property type="evidence" value="ECO:0007669"/>
    <property type="project" value="UniProtKB-KW"/>
</dbReference>
<dbReference type="GO" id="GO:0016887">
    <property type="term" value="F:ATP hydrolysis activity"/>
    <property type="evidence" value="ECO:0007669"/>
    <property type="project" value="InterPro"/>
</dbReference>
<dbReference type="GO" id="GO:0042802">
    <property type="term" value="F:identical protein binding"/>
    <property type="evidence" value="ECO:0007669"/>
    <property type="project" value="Ensembl"/>
</dbReference>
<dbReference type="GO" id="GO:0051085">
    <property type="term" value="P:chaperone cofactor-dependent protein refolding"/>
    <property type="evidence" value="ECO:0007669"/>
    <property type="project" value="InterPro"/>
</dbReference>
<dbReference type="FunFam" id="3.40.50.300:FF:001014">
    <property type="entry name" value="Torsin"/>
    <property type="match status" value="1"/>
</dbReference>
<dbReference type="Gene3D" id="3.40.50.300">
    <property type="entry name" value="P-loop containing nucleotide triphosphate hydrolases"/>
    <property type="match status" value="1"/>
</dbReference>
<dbReference type="InterPro" id="IPR001270">
    <property type="entry name" value="ClpA/B"/>
</dbReference>
<dbReference type="InterPro" id="IPR027417">
    <property type="entry name" value="P-loop_NTPase"/>
</dbReference>
<dbReference type="InterPro" id="IPR049337">
    <property type="entry name" value="TOR1A_C"/>
</dbReference>
<dbReference type="InterPro" id="IPR010448">
    <property type="entry name" value="Torsin"/>
</dbReference>
<dbReference type="InterPro" id="IPR017378">
    <property type="entry name" value="Torsin_1/2"/>
</dbReference>
<dbReference type="PANTHER" id="PTHR10760">
    <property type="entry name" value="TORSIN"/>
    <property type="match status" value="1"/>
</dbReference>
<dbReference type="PANTHER" id="PTHR10760:SF4">
    <property type="entry name" value="TORSIN-2A"/>
    <property type="match status" value="1"/>
</dbReference>
<dbReference type="Pfam" id="PF21376">
    <property type="entry name" value="TOR1A_C"/>
    <property type="match status" value="1"/>
</dbReference>
<dbReference type="Pfam" id="PF06309">
    <property type="entry name" value="Torsin"/>
    <property type="match status" value="1"/>
</dbReference>
<dbReference type="PIRSF" id="PIRSF038079">
    <property type="entry name" value="Torsin_2A"/>
    <property type="match status" value="1"/>
</dbReference>
<dbReference type="PRINTS" id="PR00300">
    <property type="entry name" value="CLPPROTEASEA"/>
</dbReference>
<dbReference type="SUPFAM" id="SSF52540">
    <property type="entry name" value="P-loop containing nucleoside triphosphate hydrolases"/>
    <property type="match status" value="1"/>
</dbReference>